<sequence>MGLVFLGPPGSGKGTISKIISNEFKYHHISTGDLFRENILNSTTLGKEIKKIVEKGELVPDQITIKIVKDKIKAIKKNDNFILDGFPRNICQAEALDKFLPNVKIINFLINEELVIKRLSGRRICKSCNNIFNIYTLATKKNGICDVCKGDLYQREDDKEECLKTRLKEYKLQTKPLIEFYSKCSRLNNVDASVEIDEIKKKIIKIMLKKN</sequence>
<proteinExistence type="inferred from homology"/>
<feature type="chain" id="PRO_0000158738" description="Adenylate kinase">
    <location>
        <begin position="1"/>
        <end position="211"/>
    </location>
</feature>
<feature type="region of interest" description="NMP" evidence="1">
    <location>
        <begin position="30"/>
        <end position="59"/>
    </location>
</feature>
<feature type="region of interest" description="LID" evidence="1">
    <location>
        <begin position="121"/>
        <end position="158"/>
    </location>
</feature>
<feature type="binding site" evidence="1">
    <location>
        <begin position="10"/>
        <end position="15"/>
    </location>
    <ligand>
        <name>ATP</name>
        <dbReference type="ChEBI" id="CHEBI:30616"/>
    </ligand>
</feature>
<feature type="binding site" evidence="1">
    <location>
        <position position="31"/>
    </location>
    <ligand>
        <name>AMP</name>
        <dbReference type="ChEBI" id="CHEBI:456215"/>
    </ligand>
</feature>
<feature type="binding site" evidence="1">
    <location>
        <position position="36"/>
    </location>
    <ligand>
        <name>AMP</name>
        <dbReference type="ChEBI" id="CHEBI:456215"/>
    </ligand>
</feature>
<feature type="binding site" evidence="1">
    <location>
        <begin position="57"/>
        <end position="59"/>
    </location>
    <ligand>
        <name>AMP</name>
        <dbReference type="ChEBI" id="CHEBI:456215"/>
    </ligand>
</feature>
<feature type="binding site" evidence="1">
    <location>
        <begin position="85"/>
        <end position="88"/>
    </location>
    <ligand>
        <name>AMP</name>
        <dbReference type="ChEBI" id="CHEBI:456215"/>
    </ligand>
</feature>
<feature type="binding site" evidence="1">
    <location>
        <position position="92"/>
    </location>
    <ligand>
        <name>AMP</name>
        <dbReference type="ChEBI" id="CHEBI:456215"/>
    </ligand>
</feature>
<feature type="binding site" evidence="1">
    <location>
        <position position="122"/>
    </location>
    <ligand>
        <name>ATP</name>
        <dbReference type="ChEBI" id="CHEBI:30616"/>
    </ligand>
</feature>
<feature type="binding site" evidence="1">
    <location>
        <position position="125"/>
    </location>
    <ligand>
        <name>Zn(2+)</name>
        <dbReference type="ChEBI" id="CHEBI:29105"/>
        <note>structural</note>
    </ligand>
</feature>
<feature type="binding site" evidence="1">
    <location>
        <position position="128"/>
    </location>
    <ligand>
        <name>Zn(2+)</name>
        <dbReference type="ChEBI" id="CHEBI:29105"/>
        <note>structural</note>
    </ligand>
</feature>
<feature type="binding site" evidence="1">
    <location>
        <begin position="131"/>
        <end position="132"/>
    </location>
    <ligand>
        <name>ATP</name>
        <dbReference type="ChEBI" id="CHEBI:30616"/>
    </ligand>
</feature>
<feature type="binding site" evidence="1">
    <location>
        <position position="145"/>
    </location>
    <ligand>
        <name>Zn(2+)</name>
        <dbReference type="ChEBI" id="CHEBI:29105"/>
        <note>structural</note>
    </ligand>
</feature>
<feature type="binding site" evidence="1">
    <location>
        <position position="148"/>
    </location>
    <ligand>
        <name>Zn(2+)</name>
        <dbReference type="ChEBI" id="CHEBI:29105"/>
        <note>structural</note>
    </ligand>
</feature>
<feature type="binding site" evidence="1">
    <location>
        <position position="155"/>
    </location>
    <ligand>
        <name>AMP</name>
        <dbReference type="ChEBI" id="CHEBI:456215"/>
    </ligand>
</feature>
<feature type="binding site" evidence="1">
    <location>
        <position position="166"/>
    </location>
    <ligand>
        <name>AMP</name>
        <dbReference type="ChEBI" id="CHEBI:456215"/>
    </ligand>
</feature>
<feature type="binding site" evidence="1">
    <location>
        <position position="194"/>
    </location>
    <ligand>
        <name>ATP</name>
        <dbReference type="ChEBI" id="CHEBI:30616"/>
    </ligand>
</feature>
<reference key="1">
    <citation type="journal article" date="2004" name="Nucleic Acids Res.">
        <title>Comparative analysis of the Borrelia garinii genome.</title>
        <authorList>
            <person name="Gloeckner G."/>
            <person name="Lehmann R."/>
            <person name="Romualdi A."/>
            <person name="Pradella S."/>
            <person name="Schulte-Spechtel U."/>
            <person name="Schilhabel M."/>
            <person name="Wilske B."/>
            <person name="Suehnel J."/>
            <person name="Platzer M."/>
        </authorList>
    </citation>
    <scope>NUCLEOTIDE SEQUENCE [LARGE SCALE GENOMIC DNA]</scope>
    <source>
        <strain>ATCC BAA-2496 / DSM 23469 / PBi</strain>
    </source>
</reference>
<evidence type="ECO:0000255" key="1">
    <source>
        <dbReference type="HAMAP-Rule" id="MF_00235"/>
    </source>
</evidence>
<protein>
    <recommendedName>
        <fullName evidence="1">Adenylate kinase</fullName>
        <shortName evidence="1">AK</shortName>
        <ecNumber evidence="1">2.7.4.3</ecNumber>
    </recommendedName>
    <alternativeName>
        <fullName evidence="1">ATP-AMP transphosphorylase</fullName>
    </alternativeName>
    <alternativeName>
        <fullName evidence="1">ATP:AMP phosphotransferase</fullName>
    </alternativeName>
    <alternativeName>
        <fullName evidence="1">Adenylate monophosphate kinase</fullName>
    </alternativeName>
</protein>
<dbReference type="EC" id="2.7.4.3" evidence="1"/>
<dbReference type="EMBL" id="CP000013">
    <property type="protein sequence ID" value="AAU07270.1"/>
    <property type="molecule type" value="Genomic_DNA"/>
</dbReference>
<dbReference type="RefSeq" id="WP_011193742.1">
    <property type="nucleotide sequence ID" value="NZ_CP028872.1"/>
</dbReference>
<dbReference type="SMR" id="Q661K1"/>
<dbReference type="GeneID" id="45161205"/>
<dbReference type="KEGG" id="bga:BG0420"/>
<dbReference type="eggNOG" id="COG0563">
    <property type="taxonomic scope" value="Bacteria"/>
</dbReference>
<dbReference type="HOGENOM" id="CLU_032354_1_2_12"/>
<dbReference type="OrthoDB" id="9805030at2"/>
<dbReference type="UniPathway" id="UPA00588">
    <property type="reaction ID" value="UER00649"/>
</dbReference>
<dbReference type="Proteomes" id="UP000002276">
    <property type="component" value="Chromosome"/>
</dbReference>
<dbReference type="GO" id="GO:0005737">
    <property type="term" value="C:cytoplasm"/>
    <property type="evidence" value="ECO:0007669"/>
    <property type="project" value="UniProtKB-SubCell"/>
</dbReference>
<dbReference type="GO" id="GO:0004017">
    <property type="term" value="F:adenylate kinase activity"/>
    <property type="evidence" value="ECO:0007669"/>
    <property type="project" value="UniProtKB-UniRule"/>
</dbReference>
<dbReference type="GO" id="GO:0005524">
    <property type="term" value="F:ATP binding"/>
    <property type="evidence" value="ECO:0007669"/>
    <property type="project" value="UniProtKB-UniRule"/>
</dbReference>
<dbReference type="GO" id="GO:0008270">
    <property type="term" value="F:zinc ion binding"/>
    <property type="evidence" value="ECO:0007669"/>
    <property type="project" value="UniProtKB-UniRule"/>
</dbReference>
<dbReference type="GO" id="GO:0044209">
    <property type="term" value="P:AMP salvage"/>
    <property type="evidence" value="ECO:0007669"/>
    <property type="project" value="UniProtKB-UniRule"/>
</dbReference>
<dbReference type="CDD" id="cd01428">
    <property type="entry name" value="ADK"/>
    <property type="match status" value="1"/>
</dbReference>
<dbReference type="FunFam" id="3.40.50.300:FF:000106">
    <property type="entry name" value="Adenylate kinase mitochondrial"/>
    <property type="match status" value="1"/>
</dbReference>
<dbReference type="Gene3D" id="3.40.50.300">
    <property type="entry name" value="P-loop containing nucleotide triphosphate hydrolases"/>
    <property type="match status" value="1"/>
</dbReference>
<dbReference type="HAMAP" id="MF_00235">
    <property type="entry name" value="Adenylate_kinase_Adk"/>
    <property type="match status" value="1"/>
</dbReference>
<dbReference type="InterPro" id="IPR006259">
    <property type="entry name" value="Adenyl_kin_sub"/>
</dbReference>
<dbReference type="InterPro" id="IPR000850">
    <property type="entry name" value="Adenylat/UMP-CMP_kin"/>
</dbReference>
<dbReference type="InterPro" id="IPR033690">
    <property type="entry name" value="Adenylat_kinase_CS"/>
</dbReference>
<dbReference type="InterPro" id="IPR007862">
    <property type="entry name" value="Adenylate_kinase_lid-dom"/>
</dbReference>
<dbReference type="InterPro" id="IPR036193">
    <property type="entry name" value="ADK_active_lid_dom_sf"/>
</dbReference>
<dbReference type="InterPro" id="IPR027417">
    <property type="entry name" value="P-loop_NTPase"/>
</dbReference>
<dbReference type="NCBIfam" id="TIGR01351">
    <property type="entry name" value="adk"/>
    <property type="match status" value="1"/>
</dbReference>
<dbReference type="NCBIfam" id="NF001381">
    <property type="entry name" value="PRK00279.1-3"/>
    <property type="match status" value="1"/>
</dbReference>
<dbReference type="NCBIfam" id="NF011099">
    <property type="entry name" value="PRK14526.1"/>
    <property type="match status" value="1"/>
</dbReference>
<dbReference type="PANTHER" id="PTHR23359">
    <property type="entry name" value="NUCLEOTIDE KINASE"/>
    <property type="match status" value="1"/>
</dbReference>
<dbReference type="Pfam" id="PF00406">
    <property type="entry name" value="ADK"/>
    <property type="match status" value="1"/>
</dbReference>
<dbReference type="Pfam" id="PF05191">
    <property type="entry name" value="ADK_lid"/>
    <property type="match status" value="1"/>
</dbReference>
<dbReference type="PRINTS" id="PR00094">
    <property type="entry name" value="ADENYLTKNASE"/>
</dbReference>
<dbReference type="SUPFAM" id="SSF57774">
    <property type="entry name" value="Microbial and mitochondrial ADK, insert 'zinc finger' domain"/>
    <property type="match status" value="1"/>
</dbReference>
<dbReference type="SUPFAM" id="SSF52540">
    <property type="entry name" value="P-loop containing nucleoside triphosphate hydrolases"/>
    <property type="match status" value="1"/>
</dbReference>
<dbReference type="PROSITE" id="PS00113">
    <property type="entry name" value="ADENYLATE_KINASE"/>
    <property type="match status" value="1"/>
</dbReference>
<name>KAD_BORGP</name>
<organism>
    <name type="scientific">Borrelia garinii subsp. bavariensis (strain ATCC BAA-2496 / DSM 23469 / PBi)</name>
    <name type="common">Borreliella bavariensis</name>
    <dbReference type="NCBI Taxonomy" id="290434"/>
    <lineage>
        <taxon>Bacteria</taxon>
        <taxon>Pseudomonadati</taxon>
        <taxon>Spirochaetota</taxon>
        <taxon>Spirochaetia</taxon>
        <taxon>Spirochaetales</taxon>
        <taxon>Borreliaceae</taxon>
        <taxon>Borreliella</taxon>
    </lineage>
</organism>
<accession>Q661K1</accession>
<keyword id="KW-0067">ATP-binding</keyword>
<keyword id="KW-0963">Cytoplasm</keyword>
<keyword id="KW-0418">Kinase</keyword>
<keyword id="KW-0479">Metal-binding</keyword>
<keyword id="KW-0545">Nucleotide biosynthesis</keyword>
<keyword id="KW-0547">Nucleotide-binding</keyword>
<keyword id="KW-0808">Transferase</keyword>
<keyword id="KW-0862">Zinc</keyword>
<comment type="function">
    <text evidence="1">Catalyzes the reversible transfer of the terminal phosphate group between ATP and AMP. Plays an important role in cellular energy homeostasis and in adenine nucleotide metabolism.</text>
</comment>
<comment type="catalytic activity">
    <reaction evidence="1">
        <text>AMP + ATP = 2 ADP</text>
        <dbReference type="Rhea" id="RHEA:12973"/>
        <dbReference type="ChEBI" id="CHEBI:30616"/>
        <dbReference type="ChEBI" id="CHEBI:456215"/>
        <dbReference type="ChEBI" id="CHEBI:456216"/>
        <dbReference type="EC" id="2.7.4.3"/>
    </reaction>
</comment>
<comment type="pathway">
    <text evidence="1">Purine metabolism; AMP biosynthesis via salvage pathway; AMP from ADP: step 1/1.</text>
</comment>
<comment type="subunit">
    <text evidence="1">Monomer.</text>
</comment>
<comment type="subcellular location">
    <subcellularLocation>
        <location evidence="1">Cytoplasm</location>
    </subcellularLocation>
</comment>
<comment type="domain">
    <text evidence="1">Consists of three domains, a large central CORE domain and two small peripheral domains, NMPbind and LID, which undergo movements during catalysis. The LID domain closes over the site of phosphoryl transfer upon ATP binding. Assembling and dissambling the active center during each catalytic cycle provides an effective means to prevent ATP hydrolysis. Some bacteria have evolved a zinc-coordinating structure that stabilizes the LID domain.</text>
</comment>
<comment type="similarity">
    <text evidence="1">Belongs to the adenylate kinase family.</text>
</comment>
<gene>
    <name evidence="1" type="primary">adk</name>
    <name type="ordered locus">BG0420</name>
</gene>